<dbReference type="EMBL" id="M60937">
    <property type="protein sequence ID" value="AAA42536.1"/>
    <property type="molecule type" value="Genomic_DNA"/>
</dbReference>
<dbReference type="PIR" id="D40318">
    <property type="entry name" value="ERADDG"/>
</dbReference>
<dbReference type="SMR" id="P22230"/>
<dbReference type="GO" id="GO:0042025">
    <property type="term" value="C:host cell nucleus"/>
    <property type="evidence" value="ECO:0007669"/>
    <property type="project" value="UniProtKB-SubCell"/>
</dbReference>
<dbReference type="GO" id="GO:0019028">
    <property type="term" value="C:viral capsid"/>
    <property type="evidence" value="ECO:0007669"/>
    <property type="project" value="UniProtKB-KW"/>
</dbReference>
<dbReference type="GO" id="GO:0098671">
    <property type="term" value="P:adhesion receptor-mediated virion attachment to host cell"/>
    <property type="evidence" value="ECO:0007669"/>
    <property type="project" value="UniProtKB-KW"/>
</dbReference>
<dbReference type="GO" id="GO:0007155">
    <property type="term" value="P:cell adhesion"/>
    <property type="evidence" value="ECO:0007669"/>
    <property type="project" value="InterPro"/>
</dbReference>
<dbReference type="GO" id="GO:0046718">
    <property type="term" value="P:symbiont entry into host cell"/>
    <property type="evidence" value="ECO:0007669"/>
    <property type="project" value="UniProtKB-KW"/>
</dbReference>
<dbReference type="Gene3D" id="6.20.10.20">
    <property type="match status" value="1"/>
</dbReference>
<dbReference type="Gene3D" id="2.60.90.10">
    <property type="entry name" value="Adenovirus pIV-related, attachment domain"/>
    <property type="match status" value="1"/>
</dbReference>
<dbReference type="Gene3D" id="2.10.25.20">
    <property type="entry name" value="reovirus attachment protein sigma1, domain 1"/>
    <property type="match status" value="3"/>
</dbReference>
<dbReference type="InterPro" id="IPR000931">
    <property type="entry name" value="Adeno_fibre"/>
</dbReference>
<dbReference type="InterPro" id="IPR000978">
    <property type="entry name" value="Adeno_fibre_knob"/>
</dbReference>
<dbReference type="InterPro" id="IPR000939">
    <property type="entry name" value="Adenobir_fibre_prot_rpt/shaft"/>
</dbReference>
<dbReference type="InterPro" id="IPR008982">
    <property type="entry name" value="Adenovirus_pIV-like_att"/>
</dbReference>
<dbReference type="InterPro" id="IPR009013">
    <property type="entry name" value="Attachment_protein_shaft_sf"/>
</dbReference>
<dbReference type="Pfam" id="PF00541">
    <property type="entry name" value="Adeno_knob"/>
    <property type="match status" value="1"/>
</dbReference>
<dbReference type="Pfam" id="PF00608">
    <property type="entry name" value="Adeno_shaft"/>
    <property type="match status" value="7"/>
</dbReference>
<dbReference type="PRINTS" id="PR00307">
    <property type="entry name" value="ADENOVSFIBRE"/>
</dbReference>
<dbReference type="SUPFAM" id="SSF51225">
    <property type="entry name" value="Fibre shaft of virus attachment proteins"/>
    <property type="match status" value="3"/>
</dbReference>
<dbReference type="SUPFAM" id="SSF49835">
    <property type="entry name" value="Virus attachment protein globular domain"/>
    <property type="match status" value="1"/>
</dbReference>
<name>SPIKE_ADECG</name>
<sequence length="543" mass="57030">MKRTRSALPANFDPVYPYDAPKPSTQPPFFNDRKGLTESSPGTLAVNISPPLTFSNLGAIKLSTGAGLILKEGKLEANIGPGLTTNQEGQITVEKDSDGLTFTSPLHKIENTVSLSIGEGLEDESGTLKVNFPSPPPPLLFSPPLAEAGGTVSLPLQESMQVTEGKLGVKPTTYSPPLQKTDQQVSLRVGPGLTVLNGQLQAVQPPATTYKEPLLETENSVSLKVGAGLAVQDGALVATPPNVTFSAPLEKNGNAVSVRVGAGLSIQGNALVATTSPTLTFAYPLIKNNNHITLSAGSGLRVSGGSLTVATGPGLSHINGTIAAVIGAGLKFENNAILAKLGNGLTIRDGAIEAVAPQPSFTPVTLWTGPDPNVNASINGTPVIRSFISLTRDSNLVTVNASFTGEGSYQSVSPTQSQFSLILEFNQFGQLMSTGNLNSTTTWGEKPWGNNTVQVQPSHTWKLCMPNREVYSTPAATLTSCGLNSIAHDGAPNRSIDCMLIINKLRGAATYTLTFRFLNFNKLSSSTVFKTDVLTFTYVGENQ</sequence>
<reference key="1">
    <citation type="journal article" date="1991" name="Virology">
        <title>Sequence analysis of putative E3 and fiber genomic regions of two strains of canine adenovirus type 1.</title>
        <authorList>
            <person name="Dragulev B.P."/>
            <person name="Sira S."/>
            <person name="Abouhaidar M.G."/>
            <person name="Campbell J.B."/>
        </authorList>
    </citation>
    <scope>NUCLEOTIDE SEQUENCE [GENOMIC DNA]</scope>
</reference>
<gene>
    <name type="ORF">L5</name>
</gene>
<evidence type="ECO:0000250" key="1"/>
<evidence type="ECO:0000256" key="2">
    <source>
        <dbReference type="SAM" id="MobiDB-lite"/>
    </source>
</evidence>
<evidence type="ECO:0000305" key="3"/>
<protein>
    <recommendedName>
        <fullName>Fiber protein</fullName>
        <shortName>SPIKE</shortName>
    </recommendedName>
    <alternativeName>
        <fullName>Protein IV</fullName>
    </alternativeName>
</protein>
<proteinExistence type="evidence at transcript level"/>
<organismHost>
    <name type="scientific">Canis lupus familiaris</name>
    <name type="common">Dog</name>
    <name type="synonym">Canis familiaris</name>
    <dbReference type="NCBI Taxonomy" id="9615"/>
</organismHost>
<organism>
    <name type="scientific">Canine adenovirus serotype 1 (strain Glaxo)</name>
    <name type="common">CAdV-1</name>
    <name type="synonym">Canine adenovirus 1 (strain Glaxo)</name>
    <dbReference type="NCBI Taxonomy" id="10513"/>
    <lineage>
        <taxon>Viruses</taxon>
        <taxon>Varidnaviria</taxon>
        <taxon>Bamfordvirae</taxon>
        <taxon>Preplasmiviricota</taxon>
        <taxon>Tectiliviricetes</taxon>
        <taxon>Rowavirales</taxon>
        <taxon>Adenoviridae</taxon>
        <taxon>Mastadenovirus</taxon>
        <taxon>Canine mastadenovirus A</taxon>
    </lineage>
</organism>
<keyword id="KW-0167">Capsid protein</keyword>
<keyword id="KW-1048">Host nucleus</keyword>
<keyword id="KW-0945">Host-virus interaction</keyword>
<keyword id="KW-0426">Late protein</keyword>
<keyword id="KW-1233">Viral attachment to host adhesion receptor</keyword>
<keyword id="KW-1161">Viral attachment to host cell</keyword>
<keyword id="KW-0946">Virion</keyword>
<keyword id="KW-1160">Virus entry into host cell</keyword>
<accession>P22230</accession>
<comment type="function">
    <text evidence="1">Forms spikes that protrude from each vertex of the icosahedral capsid. Interacts with host receptor to provide virion initial attachment to target cell. Fiber proteins are shed during virus entry, when virus is still at the cell surface (By similarity).</text>
</comment>
<comment type="subunit">
    <text evidence="1">Homotrimer. Interacts (via N-terminal tail region) with pentons (By similarity).</text>
</comment>
<comment type="subcellular location">
    <subcellularLocation>
        <location evidence="1">Virion</location>
    </subcellularLocation>
    <subcellularLocation>
        <location evidence="1">Host nucleus</location>
    </subcellularLocation>
    <text evidence="1">Anchored to the pentons, protrudes from the virion surface.</text>
</comment>
<comment type="induction">
    <text>Expressed in the late phase of the viral replicative cycle.</text>
</comment>
<comment type="domain">
    <text evidence="1">The tail region anchors the fiber to penton base capsomers, whereas the shaft, built from several repeated motifs, allows the knob to protrude from the virion.</text>
</comment>
<comment type="miscellaneous">
    <text evidence="1">All late proteins expressed from the major late promoter are produced by alternative splicing and alternative polyadenylation of the same gene giving rise to non-overlapping ORFs. A leader sequence is present in the N-terminus of all these mRNAs and is recognized by the viral shutoff protein to provide expression although conventional translation via ribosome scanning from the cap has been shut off in the host cell (By similarity).</text>
</comment>
<comment type="similarity">
    <text evidence="3">Belongs to the adenoviridae fiber family.</text>
</comment>
<feature type="chain" id="PRO_0000221805" description="Fiber protein">
    <location>
        <begin position="1"/>
        <end position="543"/>
    </location>
</feature>
<feature type="region of interest" description="Disordered" evidence="2">
    <location>
        <begin position="1"/>
        <end position="36"/>
    </location>
</feature>